<reference key="1">
    <citation type="journal article" date="1995" name="J. Protein Chem.">
        <title>Complete amino acid sequence of Proteus mirabilis PR catalase. Occurrence of a methionine sulfone in the close proximity of the active site.</title>
        <authorList>
            <person name="Buzy A."/>
            <person name="Bracchi V."/>
            <person name="Sterjiades R."/>
            <person name="Chroboczek J."/>
            <person name="Thibault P."/>
            <person name="Gagnon J."/>
            <person name="Jouve H.-M."/>
            <person name="Hudry-Clergeon G."/>
        </authorList>
    </citation>
    <scope>PROTEIN SEQUENCE</scope>
    <scope>NUCLEOTIDE SEQUENCE [GENOMIC DNA] OF 1-305</scope>
    <scope>OXIDATION AT MET-53</scope>
    <scope>MASS SPECTROMETRY</scope>
    <source>
        <strain>PR</strain>
    </source>
</reference>
<reference key="2">
    <citation type="journal article" date="1995" name="J. Mol. Biol.">
        <title>Crystal structure of Proteus mirabilis PR catalase with and without bound NADPH.</title>
        <authorList>
            <person name="Gouet P."/>
            <person name="Jouve H.-M."/>
            <person name="Dideberg O."/>
        </authorList>
    </citation>
    <scope>X-RAY CRYSTALLOGRAPHY (2.2 ANGSTROMS)</scope>
    <source>
        <strain>PR</strain>
    </source>
</reference>
<reference key="3">
    <citation type="journal article" date="1996" name="Nat. Struct. Biol.">
        <title>Ferryl intermediates of catalase captured by time-resolved Weissenberg crystallography and UV-VIS spectroscopy.</title>
        <authorList>
            <person name="Gouet P."/>
            <person name="Jouve H.-M."/>
            <person name="Williams P.A."/>
            <person name="Andersson I."/>
            <person name="Andreoletti P."/>
            <person name="Nussaume L."/>
            <person name="Hajdu J."/>
        </authorList>
    </citation>
    <scope>X-RAY CRYSTALLOGRAPHY (2.7 ANGSTROMS)</scope>
    <scope>ABSORPTION SPECTROSCOPY</scope>
</reference>
<reference key="4">
    <citation type="journal article" date="2003" name="Proteins">
        <title>High-resolution structure and biochemical properties of a recombinant Proteus mirabilis catalase depleted in iron.</title>
        <authorList>
            <person name="Andreoletti P."/>
            <person name="Sainz G."/>
            <person name="Jaquinod M."/>
            <person name="Gagnon J."/>
            <person name="Jouve H.-M."/>
        </authorList>
    </citation>
    <scope>X-RAY CRYSTALLOGRAPHY (2.0 ANGSTROMS)</scope>
    <scope>EPR SPECTROSCOPY</scope>
</reference>
<feature type="chain" id="PRO_0000084992" description="Catalase">
    <location>
        <begin position="1"/>
        <end position="484"/>
    </location>
</feature>
<feature type="active site">
    <location>
        <position position="54"/>
    </location>
</feature>
<feature type="active site">
    <location>
        <position position="127"/>
    </location>
</feature>
<feature type="binding site" description="axial binding residue" evidence="3">
    <location>
        <position position="337"/>
    </location>
    <ligand>
        <name>heme</name>
        <dbReference type="ChEBI" id="CHEBI:30413"/>
    </ligand>
    <ligandPart>
        <name>Fe</name>
        <dbReference type="ChEBI" id="CHEBI:18248"/>
    </ligandPart>
</feature>
<feature type="modified residue" description="Methionine sulfone" evidence="2">
    <location>
        <position position="53"/>
    </location>
</feature>
<feature type="strand" evidence="5">
    <location>
        <begin position="17"/>
        <end position="19"/>
    </location>
</feature>
<feature type="strand" evidence="5">
    <location>
        <begin position="22"/>
        <end position="24"/>
    </location>
</feature>
<feature type="helix" evidence="5">
    <location>
        <begin position="34"/>
        <end position="43"/>
    </location>
</feature>
<feature type="strand" evidence="6">
    <location>
        <begin position="52"/>
        <end position="54"/>
    </location>
</feature>
<feature type="strand" evidence="5">
    <location>
        <begin position="56"/>
        <end position="66"/>
    </location>
</feature>
<feature type="turn" evidence="5">
    <location>
        <begin position="71"/>
        <end position="73"/>
    </location>
</feature>
<feature type="helix" evidence="5">
    <location>
        <begin position="77"/>
        <end position="79"/>
    </location>
</feature>
<feature type="strand" evidence="5">
    <location>
        <begin position="85"/>
        <end position="93"/>
    </location>
</feature>
<feature type="strand" evidence="5">
    <location>
        <begin position="95"/>
        <end position="97"/>
    </location>
</feature>
<feature type="strand" evidence="5">
    <location>
        <begin position="103"/>
        <end position="107"/>
    </location>
</feature>
<feature type="strand" evidence="5">
    <location>
        <begin position="110"/>
        <end position="117"/>
    </location>
</feature>
<feature type="strand" evidence="5">
    <location>
        <begin position="120"/>
        <end position="130"/>
    </location>
</feature>
<feature type="helix" evidence="5">
    <location>
        <begin position="137"/>
        <end position="139"/>
    </location>
</feature>
<feature type="helix" evidence="5">
    <location>
        <begin position="140"/>
        <end position="147"/>
    </location>
</feature>
<feature type="turn" evidence="5">
    <location>
        <begin position="151"/>
        <end position="153"/>
    </location>
</feature>
<feature type="helix" evidence="5">
    <location>
        <begin position="158"/>
        <end position="166"/>
    </location>
</feature>
<feature type="helix" evidence="5">
    <location>
        <begin position="169"/>
        <end position="171"/>
    </location>
</feature>
<feature type="helix" evidence="5">
    <location>
        <begin position="172"/>
        <end position="179"/>
    </location>
</feature>
<feature type="helix" evidence="5">
    <location>
        <begin position="181"/>
        <end position="183"/>
    </location>
</feature>
<feature type="strand" evidence="5">
    <location>
        <begin position="184"/>
        <end position="186"/>
    </location>
</feature>
<feature type="helix" evidence="5">
    <location>
        <begin position="188"/>
        <end position="190"/>
    </location>
</feature>
<feature type="strand" evidence="5">
    <location>
        <begin position="199"/>
        <end position="202"/>
    </location>
</feature>
<feature type="strand" evidence="5">
    <location>
        <begin position="208"/>
        <end position="217"/>
    </location>
</feature>
<feature type="helix" evidence="5">
    <location>
        <begin position="226"/>
        <end position="235"/>
    </location>
</feature>
<feature type="helix" evidence="5">
    <location>
        <begin position="239"/>
        <end position="249"/>
    </location>
</feature>
<feature type="strand" evidence="5">
    <location>
        <begin position="255"/>
        <end position="264"/>
    </location>
</feature>
<feature type="helix" evidence="5">
    <location>
        <begin position="265"/>
        <end position="269"/>
    </location>
</feature>
<feature type="strand" evidence="5">
    <location>
        <begin position="271"/>
        <end position="273"/>
    </location>
</feature>
<feature type="turn" evidence="5">
    <location>
        <begin position="284"/>
        <end position="286"/>
    </location>
</feature>
<feature type="strand" evidence="5">
    <location>
        <begin position="290"/>
        <end position="299"/>
    </location>
</feature>
<feature type="helix" evidence="5">
    <location>
        <begin position="304"/>
        <end position="307"/>
    </location>
</feature>
<feature type="turn" evidence="5">
    <location>
        <begin position="308"/>
        <end position="310"/>
    </location>
</feature>
<feature type="helix" evidence="5">
    <location>
        <begin position="328"/>
        <end position="345"/>
    </location>
</feature>
<feature type="helix" evidence="5">
    <location>
        <begin position="349"/>
        <end position="351"/>
    </location>
</feature>
<feature type="turn" evidence="5">
    <location>
        <begin position="353"/>
        <end position="355"/>
    </location>
</feature>
<feature type="strand" evidence="7">
    <location>
        <begin position="358"/>
        <end position="360"/>
    </location>
</feature>
<feature type="strand" evidence="7">
    <location>
        <begin position="382"/>
        <end position="384"/>
    </location>
</feature>
<feature type="strand" evidence="5">
    <location>
        <begin position="386"/>
        <end position="388"/>
    </location>
</feature>
<feature type="helix" evidence="5">
    <location>
        <begin position="394"/>
        <end position="396"/>
    </location>
</feature>
<feature type="helix" evidence="5">
    <location>
        <begin position="412"/>
        <end position="414"/>
    </location>
</feature>
<feature type="helix" evidence="5">
    <location>
        <begin position="420"/>
        <end position="428"/>
    </location>
</feature>
<feature type="helix" evidence="5">
    <location>
        <begin position="431"/>
        <end position="445"/>
    </location>
</feature>
<feature type="helix" evidence="5">
    <location>
        <begin position="450"/>
        <end position="463"/>
    </location>
</feature>
<feature type="helix" evidence="5">
    <location>
        <begin position="465"/>
        <end position="478"/>
    </location>
</feature>
<dbReference type="EC" id="1.11.1.6"/>
<dbReference type="PIR" id="A58663">
    <property type="entry name" value="A58663"/>
</dbReference>
<dbReference type="RefSeq" id="WP_004248382.1">
    <property type="nucleotide sequence ID" value="NZ_WURR01000010.1"/>
</dbReference>
<dbReference type="PDB" id="1E93">
    <property type="method" value="X-ray"/>
    <property type="resolution" value="2.00 A"/>
    <property type="chains" value="A=1-484"/>
</dbReference>
<dbReference type="PDB" id="1H6N">
    <property type="method" value="X-ray"/>
    <property type="resolution" value="2.11 A"/>
    <property type="chains" value="A=1-484"/>
</dbReference>
<dbReference type="PDB" id="1H7K">
    <property type="method" value="X-ray"/>
    <property type="resolution" value="2.40 A"/>
    <property type="chains" value="A=2-484"/>
</dbReference>
<dbReference type="PDB" id="1M85">
    <property type="method" value="X-ray"/>
    <property type="resolution" value="2.00 A"/>
    <property type="chains" value="A=1-484"/>
</dbReference>
<dbReference type="PDB" id="1MQF">
    <property type="method" value="X-ray"/>
    <property type="resolution" value="2.50 A"/>
    <property type="chains" value="A=1-484"/>
</dbReference>
<dbReference type="PDB" id="1NM0">
    <property type="method" value="X-ray"/>
    <property type="resolution" value="2.30 A"/>
    <property type="chains" value="A=1-484"/>
</dbReference>
<dbReference type="PDB" id="2CAG">
    <property type="method" value="X-ray"/>
    <property type="resolution" value="2.70 A"/>
    <property type="chains" value="A=1-484"/>
</dbReference>
<dbReference type="PDB" id="2CAH">
    <property type="method" value="X-ray"/>
    <property type="resolution" value="2.70 A"/>
    <property type="chains" value="A=1-484"/>
</dbReference>
<dbReference type="PDB" id="3HB6">
    <property type="method" value="X-ray"/>
    <property type="resolution" value="2.30 A"/>
    <property type="chains" value="A=1-484"/>
</dbReference>
<dbReference type="PDBsum" id="1E93"/>
<dbReference type="PDBsum" id="1H6N"/>
<dbReference type="PDBsum" id="1H7K"/>
<dbReference type="PDBsum" id="1M85"/>
<dbReference type="PDBsum" id="1MQF"/>
<dbReference type="PDBsum" id="1NM0"/>
<dbReference type="PDBsum" id="2CAG"/>
<dbReference type="PDBsum" id="2CAH"/>
<dbReference type="PDBsum" id="3HB6"/>
<dbReference type="SMR" id="P42321"/>
<dbReference type="STRING" id="584.AOUC001_06445"/>
<dbReference type="DrugBank" id="DB01942">
    <property type="generic name" value="Formic acid"/>
</dbReference>
<dbReference type="DrugBank" id="DB03790">
    <property type="generic name" value="L-methionine sulfone"/>
</dbReference>
<dbReference type="OMA" id="KFRWNVF"/>
<dbReference type="BRENDA" id="1.11.1.6">
    <property type="organism ID" value="5044"/>
</dbReference>
<dbReference type="SABIO-RK" id="P42321"/>
<dbReference type="EvolutionaryTrace" id="P42321"/>
<dbReference type="GO" id="GO:0005737">
    <property type="term" value="C:cytoplasm"/>
    <property type="evidence" value="ECO:0007669"/>
    <property type="project" value="UniProtKB-SubCell"/>
</dbReference>
<dbReference type="GO" id="GO:0004096">
    <property type="term" value="F:catalase activity"/>
    <property type="evidence" value="ECO:0007669"/>
    <property type="project" value="UniProtKB-EC"/>
</dbReference>
<dbReference type="GO" id="GO:0020037">
    <property type="term" value="F:heme binding"/>
    <property type="evidence" value="ECO:0007669"/>
    <property type="project" value="InterPro"/>
</dbReference>
<dbReference type="GO" id="GO:0046872">
    <property type="term" value="F:metal ion binding"/>
    <property type="evidence" value="ECO:0007669"/>
    <property type="project" value="UniProtKB-KW"/>
</dbReference>
<dbReference type="GO" id="GO:0042744">
    <property type="term" value="P:hydrogen peroxide catabolic process"/>
    <property type="evidence" value="ECO:0007669"/>
    <property type="project" value="UniProtKB-KW"/>
</dbReference>
<dbReference type="GO" id="GO:0042542">
    <property type="term" value="P:response to hydrogen peroxide"/>
    <property type="evidence" value="ECO:0007669"/>
    <property type="project" value="TreeGrafter"/>
</dbReference>
<dbReference type="CDD" id="cd08156">
    <property type="entry name" value="catalase_clade_3"/>
    <property type="match status" value="1"/>
</dbReference>
<dbReference type="FunFam" id="2.40.180.10:FF:000001">
    <property type="entry name" value="Catalase"/>
    <property type="match status" value="1"/>
</dbReference>
<dbReference type="Gene3D" id="2.40.180.10">
    <property type="entry name" value="Catalase core domain"/>
    <property type="match status" value="1"/>
</dbReference>
<dbReference type="InterPro" id="IPR018028">
    <property type="entry name" value="Catalase"/>
</dbReference>
<dbReference type="InterPro" id="IPR040333">
    <property type="entry name" value="Catalase_3"/>
</dbReference>
<dbReference type="InterPro" id="IPR024708">
    <property type="entry name" value="Catalase_AS"/>
</dbReference>
<dbReference type="InterPro" id="IPR024711">
    <property type="entry name" value="Catalase_clade1/3"/>
</dbReference>
<dbReference type="InterPro" id="IPR011614">
    <property type="entry name" value="Catalase_core"/>
</dbReference>
<dbReference type="InterPro" id="IPR002226">
    <property type="entry name" value="Catalase_haem_BS"/>
</dbReference>
<dbReference type="InterPro" id="IPR010582">
    <property type="entry name" value="Catalase_immune_responsive"/>
</dbReference>
<dbReference type="InterPro" id="IPR020835">
    <property type="entry name" value="Catalase_sf"/>
</dbReference>
<dbReference type="PANTHER" id="PTHR11465">
    <property type="entry name" value="CATALASE"/>
    <property type="match status" value="1"/>
</dbReference>
<dbReference type="PANTHER" id="PTHR11465:SF61">
    <property type="entry name" value="CATALASE"/>
    <property type="match status" value="1"/>
</dbReference>
<dbReference type="Pfam" id="PF00199">
    <property type="entry name" value="Catalase"/>
    <property type="match status" value="1"/>
</dbReference>
<dbReference type="Pfam" id="PF06628">
    <property type="entry name" value="Catalase-rel"/>
    <property type="match status" value="1"/>
</dbReference>
<dbReference type="PIRSF" id="PIRSF038928">
    <property type="entry name" value="Catalase_clade1-3"/>
    <property type="match status" value="1"/>
</dbReference>
<dbReference type="PRINTS" id="PR00067">
    <property type="entry name" value="CATALASE"/>
</dbReference>
<dbReference type="SMART" id="SM01060">
    <property type="entry name" value="Catalase"/>
    <property type="match status" value="1"/>
</dbReference>
<dbReference type="SUPFAM" id="SSF56634">
    <property type="entry name" value="Heme-dependent catalase-like"/>
    <property type="match status" value="1"/>
</dbReference>
<dbReference type="PROSITE" id="PS00437">
    <property type="entry name" value="CATALASE_1"/>
    <property type="match status" value="1"/>
</dbReference>
<dbReference type="PROSITE" id="PS00438">
    <property type="entry name" value="CATALASE_2"/>
    <property type="match status" value="1"/>
</dbReference>
<dbReference type="PROSITE" id="PS51402">
    <property type="entry name" value="CATALASE_3"/>
    <property type="match status" value="1"/>
</dbReference>
<name>CATA_PROMI</name>
<proteinExistence type="evidence at protein level"/>
<protein>
    <recommendedName>
        <fullName>Catalase</fullName>
        <ecNumber>1.11.1.6</ecNumber>
    </recommendedName>
</protein>
<evidence type="ECO:0000255" key="1">
    <source>
        <dbReference type="PROSITE-ProRule" id="PRU10013"/>
    </source>
</evidence>
<evidence type="ECO:0000269" key="2">
    <source>
    </source>
</evidence>
<evidence type="ECO:0000269" key="3">
    <source>
    </source>
</evidence>
<evidence type="ECO:0000305" key="4"/>
<evidence type="ECO:0007829" key="5">
    <source>
        <dbReference type="PDB" id="1E93"/>
    </source>
</evidence>
<evidence type="ECO:0007829" key="6">
    <source>
        <dbReference type="PDB" id="1H6N"/>
    </source>
</evidence>
<evidence type="ECO:0007829" key="7">
    <source>
        <dbReference type="PDB" id="1M85"/>
    </source>
</evidence>
<organism>
    <name type="scientific">Proteus mirabilis</name>
    <dbReference type="NCBI Taxonomy" id="584"/>
    <lineage>
        <taxon>Bacteria</taxon>
        <taxon>Pseudomonadati</taxon>
        <taxon>Pseudomonadota</taxon>
        <taxon>Gammaproteobacteria</taxon>
        <taxon>Enterobacterales</taxon>
        <taxon>Morganellaceae</taxon>
        <taxon>Proteus</taxon>
    </lineage>
</organism>
<gene>
    <name type="primary">katA</name>
</gene>
<comment type="function">
    <text>Decomposes hydrogen peroxide into water and oxygen; serves to protect cells from the toxic effects of hydrogen peroxide.</text>
</comment>
<comment type="catalytic activity">
    <reaction evidence="1">
        <text>2 H2O2 = O2 + 2 H2O</text>
        <dbReference type="Rhea" id="RHEA:20309"/>
        <dbReference type="ChEBI" id="CHEBI:15377"/>
        <dbReference type="ChEBI" id="CHEBI:15379"/>
        <dbReference type="ChEBI" id="CHEBI:16240"/>
        <dbReference type="EC" id="1.11.1.6"/>
    </reaction>
</comment>
<comment type="cofactor">
    <cofactor>
        <name>heme</name>
        <dbReference type="ChEBI" id="CHEBI:30413"/>
    </cofactor>
</comment>
<comment type="cofactor">
    <cofactor>
        <name>NADP(+)</name>
        <dbReference type="ChEBI" id="CHEBI:58349"/>
    </cofactor>
</comment>
<comment type="subunit">
    <text>Homotetramer.</text>
</comment>
<comment type="subcellular location">
    <subcellularLocation>
        <location>Cytoplasm</location>
    </subcellularLocation>
</comment>
<comment type="mass spectrometry" mass="55643.0" error="5.0" method="Electrospray" evidence="2"/>
<comment type="similarity">
    <text evidence="4">Belongs to the catalase family.</text>
</comment>
<accession>P42321</accession>
<sequence length="484" mass="55614">MEKKKLTTAAGAPVVDNNNVITAGPRGPMLLQDVWFLEKLAHFDREVIPERRMHAKGSGAFGTFTVTHDITKYTRAKIFSEVGKKTEMFARFSTVAGERGAADAERDIRGFALKFYTEEGNWDMVGNNTPVFYLRDPLKFPDLNHIVKRDPRTNMRNMAYKWDFFSHLPESLHQLTIDMSDRGLPLSYRFVHGFGSHTYSFINKDNERFWVKFHFRCQQGIKNLMDDEAEALVGKDRESSQRDLFEAIERGDYPRWKLQIQIMPEKEASTVPYNPFDLTKVWPHADYPLMDVGYFELNRNPDNYFSDVEQAAFSPANIVPGISFSPDKMLQGRLFSYGDAHRYRLGVNHHQIPVNAPKCPFHNYHRDGAMRVDGNSGNGITYEPNSGGVFQEQPDFKEPPLSIEGAADHWNHREDEDYFSQPRALYELLSDDEHQRMFARIAGELSQASKETQQRQIDLFTKVHPEYGAGVEKAIKVLEGKDAK</sequence>
<keyword id="KW-0002">3D-structure</keyword>
<keyword id="KW-0963">Cytoplasm</keyword>
<keyword id="KW-0903">Direct protein sequencing</keyword>
<keyword id="KW-0349">Heme</keyword>
<keyword id="KW-0376">Hydrogen peroxide</keyword>
<keyword id="KW-0408">Iron</keyword>
<keyword id="KW-0479">Metal-binding</keyword>
<keyword id="KW-0521">NADP</keyword>
<keyword id="KW-0558">Oxidation</keyword>
<keyword id="KW-0560">Oxidoreductase</keyword>
<keyword id="KW-0575">Peroxidase</keyword>